<evidence type="ECO:0000255" key="1">
    <source>
        <dbReference type="HAMAP-Rule" id="MF_01077"/>
    </source>
</evidence>
<evidence type="ECO:0000305" key="2"/>
<name>RIMP_SALCH</name>
<gene>
    <name evidence="1" type="primary">rimP</name>
    <name type="ordered locus">SCH_3229</name>
</gene>
<reference key="1">
    <citation type="journal article" date="2005" name="Nucleic Acids Res.">
        <title>The genome sequence of Salmonella enterica serovar Choleraesuis, a highly invasive and resistant zoonotic pathogen.</title>
        <authorList>
            <person name="Chiu C.-H."/>
            <person name="Tang P."/>
            <person name="Chu C."/>
            <person name="Hu S."/>
            <person name="Bao Q."/>
            <person name="Yu J."/>
            <person name="Chou Y.-Y."/>
            <person name="Wang H.-S."/>
            <person name="Lee Y.-S."/>
        </authorList>
    </citation>
    <scope>NUCLEOTIDE SEQUENCE [LARGE SCALE GENOMIC DNA]</scope>
    <source>
        <strain>SC-B67</strain>
    </source>
</reference>
<accession>Q57JH7</accession>
<dbReference type="EMBL" id="AE017220">
    <property type="protein sequence ID" value="AAX67135.1"/>
    <property type="status" value="ALT_INIT"/>
    <property type="molecule type" value="Genomic_DNA"/>
</dbReference>
<dbReference type="SMR" id="Q57JH7"/>
<dbReference type="KEGG" id="sec:SCH_3229"/>
<dbReference type="HOGENOM" id="CLU_070525_1_1_6"/>
<dbReference type="Proteomes" id="UP000000538">
    <property type="component" value="Chromosome"/>
</dbReference>
<dbReference type="GO" id="GO:0005829">
    <property type="term" value="C:cytosol"/>
    <property type="evidence" value="ECO:0007669"/>
    <property type="project" value="TreeGrafter"/>
</dbReference>
<dbReference type="GO" id="GO:0000028">
    <property type="term" value="P:ribosomal small subunit assembly"/>
    <property type="evidence" value="ECO:0007669"/>
    <property type="project" value="TreeGrafter"/>
</dbReference>
<dbReference type="GO" id="GO:0006412">
    <property type="term" value="P:translation"/>
    <property type="evidence" value="ECO:0007669"/>
    <property type="project" value="TreeGrafter"/>
</dbReference>
<dbReference type="CDD" id="cd01734">
    <property type="entry name" value="YlxS_C"/>
    <property type="match status" value="1"/>
</dbReference>
<dbReference type="FunFam" id="2.30.30.180:FF:000001">
    <property type="entry name" value="Ribosome maturation factor RimP"/>
    <property type="match status" value="1"/>
</dbReference>
<dbReference type="FunFam" id="3.30.300.70:FF:000001">
    <property type="entry name" value="Ribosome maturation factor RimP"/>
    <property type="match status" value="1"/>
</dbReference>
<dbReference type="Gene3D" id="2.30.30.180">
    <property type="entry name" value="Ribosome maturation factor RimP, C-terminal domain"/>
    <property type="match status" value="1"/>
</dbReference>
<dbReference type="Gene3D" id="3.30.300.70">
    <property type="entry name" value="RimP-like superfamily, N-terminal"/>
    <property type="match status" value="1"/>
</dbReference>
<dbReference type="HAMAP" id="MF_01077">
    <property type="entry name" value="RimP"/>
    <property type="match status" value="1"/>
</dbReference>
<dbReference type="InterPro" id="IPR003728">
    <property type="entry name" value="Ribosome_maturation_RimP"/>
</dbReference>
<dbReference type="InterPro" id="IPR028998">
    <property type="entry name" value="RimP_C"/>
</dbReference>
<dbReference type="InterPro" id="IPR036847">
    <property type="entry name" value="RimP_C_sf"/>
</dbReference>
<dbReference type="InterPro" id="IPR028989">
    <property type="entry name" value="RimP_N"/>
</dbReference>
<dbReference type="InterPro" id="IPR035956">
    <property type="entry name" value="RimP_N_sf"/>
</dbReference>
<dbReference type="NCBIfam" id="NF000927">
    <property type="entry name" value="PRK00092.1-1"/>
    <property type="match status" value="1"/>
</dbReference>
<dbReference type="PANTHER" id="PTHR33867">
    <property type="entry name" value="RIBOSOME MATURATION FACTOR RIMP"/>
    <property type="match status" value="1"/>
</dbReference>
<dbReference type="PANTHER" id="PTHR33867:SF1">
    <property type="entry name" value="RIBOSOME MATURATION FACTOR RIMP"/>
    <property type="match status" value="1"/>
</dbReference>
<dbReference type="Pfam" id="PF17384">
    <property type="entry name" value="DUF150_C"/>
    <property type="match status" value="1"/>
</dbReference>
<dbReference type="Pfam" id="PF02576">
    <property type="entry name" value="RimP_N"/>
    <property type="match status" value="1"/>
</dbReference>
<dbReference type="SUPFAM" id="SSF74942">
    <property type="entry name" value="YhbC-like, C-terminal domain"/>
    <property type="match status" value="1"/>
</dbReference>
<dbReference type="SUPFAM" id="SSF75420">
    <property type="entry name" value="YhbC-like, N-terminal domain"/>
    <property type="match status" value="1"/>
</dbReference>
<proteinExistence type="inferred from homology"/>
<sequence>MGLSTLEQKLTEMITAPVEALGYELVGIEFIRGRTSTLRIYIDSEDGINVDDCADVSHQVSAVLDVEDPISVAYNLEVSSPGLDRPMFTADHYARFQGEEVALVLRMAVQNRRKWQGIIKAVDGEMITVTVEGKDEVFALSNIQKANLVPHF</sequence>
<feature type="chain" id="PRO_0000229274" description="Ribosome maturation factor RimP">
    <location>
        <begin position="1"/>
        <end position="152"/>
    </location>
</feature>
<comment type="function">
    <text evidence="1">Required for maturation of 30S ribosomal subunits.</text>
</comment>
<comment type="subcellular location">
    <subcellularLocation>
        <location evidence="1">Cytoplasm</location>
    </subcellularLocation>
</comment>
<comment type="similarity">
    <text evidence="1">Belongs to the RimP family.</text>
</comment>
<comment type="sequence caution" evidence="2">
    <conflict type="erroneous initiation">
        <sequence resource="EMBL-CDS" id="AAX67135"/>
    </conflict>
</comment>
<keyword id="KW-0963">Cytoplasm</keyword>
<keyword id="KW-0690">Ribosome biogenesis</keyword>
<organism>
    <name type="scientific">Salmonella choleraesuis (strain SC-B67)</name>
    <dbReference type="NCBI Taxonomy" id="321314"/>
    <lineage>
        <taxon>Bacteria</taxon>
        <taxon>Pseudomonadati</taxon>
        <taxon>Pseudomonadota</taxon>
        <taxon>Gammaproteobacteria</taxon>
        <taxon>Enterobacterales</taxon>
        <taxon>Enterobacteriaceae</taxon>
        <taxon>Salmonella</taxon>
    </lineage>
</organism>
<protein>
    <recommendedName>
        <fullName evidence="1">Ribosome maturation factor RimP</fullName>
    </recommendedName>
</protein>